<gene>
    <name evidence="1" type="primary">lgt</name>
    <name type="ordered locus">NMA1273</name>
</gene>
<feature type="chain" id="PRO_0000172640" description="Phosphatidylglycerol--prolipoprotein diacylglyceryl transferase">
    <location>
        <begin position="1"/>
        <end position="283"/>
    </location>
</feature>
<feature type="transmembrane region" description="Helical" evidence="1">
    <location>
        <begin position="17"/>
        <end position="37"/>
    </location>
</feature>
<feature type="transmembrane region" description="Helical" evidence="1">
    <location>
        <begin position="56"/>
        <end position="76"/>
    </location>
</feature>
<feature type="transmembrane region" description="Helical" evidence="1">
    <location>
        <begin position="92"/>
        <end position="112"/>
    </location>
</feature>
<feature type="transmembrane region" description="Helical" evidence="1">
    <location>
        <begin position="117"/>
        <end position="137"/>
    </location>
</feature>
<feature type="transmembrane region" description="Helical" evidence="1">
    <location>
        <begin position="194"/>
        <end position="214"/>
    </location>
</feature>
<feature type="transmembrane region" description="Helical" evidence="1">
    <location>
        <begin position="222"/>
        <end position="242"/>
    </location>
</feature>
<feature type="transmembrane region" description="Helical" evidence="1">
    <location>
        <begin position="255"/>
        <end position="275"/>
    </location>
</feature>
<feature type="binding site" evidence="1">
    <location>
        <position position="139"/>
    </location>
    <ligand>
        <name>a 1,2-diacyl-sn-glycero-3-phospho-(1'-sn-glycerol)</name>
        <dbReference type="ChEBI" id="CHEBI:64716"/>
    </ligand>
</feature>
<proteinExistence type="inferred from homology"/>
<organism>
    <name type="scientific">Neisseria meningitidis serogroup A / serotype 4A (strain DSM 15465 / Z2491)</name>
    <dbReference type="NCBI Taxonomy" id="122587"/>
    <lineage>
        <taxon>Bacteria</taxon>
        <taxon>Pseudomonadati</taxon>
        <taxon>Pseudomonadota</taxon>
        <taxon>Betaproteobacteria</taxon>
        <taxon>Neisseriales</taxon>
        <taxon>Neisseriaceae</taxon>
        <taxon>Neisseria</taxon>
    </lineage>
</organism>
<sequence>MITHPQFDPVLISIGPLAVRWYALSYILGFILFTFLGRRRIAQGLSVFTKESLDDFLTWGILGVILGGRLGYVLFYKFSDYLAHPLDIFKVWEGGMSFHGGFLGVVIAIWLFGRKHGIGFLKLMDTVAPLVPLGLASGRIGNFINGELWGRVTDINAFWAMGFPQARYEDLEAAAHNPLWAEWLQQYGMLPRHPSQLYQFALEGICLFAVVWLFSKKQRPTGQVASLFLGGYGIFRFIAEFARQPDDYLGLLTLGLSMGQWLSVPMIVLGIVGFVRFGMKKQH</sequence>
<comment type="function">
    <text evidence="1">Catalyzes the transfer of the diacylglyceryl group from phosphatidylglycerol to the sulfhydryl group of the N-terminal cysteine of a prolipoprotein, the first step in the formation of mature lipoproteins.</text>
</comment>
<comment type="catalytic activity">
    <reaction evidence="1">
        <text>L-cysteinyl-[prolipoprotein] + a 1,2-diacyl-sn-glycero-3-phospho-(1'-sn-glycerol) = an S-1,2-diacyl-sn-glyceryl-L-cysteinyl-[prolipoprotein] + sn-glycerol 1-phosphate + H(+)</text>
        <dbReference type="Rhea" id="RHEA:56712"/>
        <dbReference type="Rhea" id="RHEA-COMP:14679"/>
        <dbReference type="Rhea" id="RHEA-COMP:14680"/>
        <dbReference type="ChEBI" id="CHEBI:15378"/>
        <dbReference type="ChEBI" id="CHEBI:29950"/>
        <dbReference type="ChEBI" id="CHEBI:57685"/>
        <dbReference type="ChEBI" id="CHEBI:64716"/>
        <dbReference type="ChEBI" id="CHEBI:140658"/>
        <dbReference type="EC" id="2.5.1.145"/>
    </reaction>
</comment>
<comment type="pathway">
    <text evidence="1">Protein modification; lipoprotein biosynthesis (diacylglyceryl transfer).</text>
</comment>
<comment type="subcellular location">
    <subcellularLocation>
        <location evidence="1">Cell inner membrane</location>
        <topology evidence="1">Multi-pass membrane protein</topology>
    </subcellularLocation>
</comment>
<comment type="similarity">
    <text evidence="1">Belongs to the Lgt family.</text>
</comment>
<reference key="1">
    <citation type="journal article" date="2000" name="Nature">
        <title>Complete DNA sequence of a serogroup A strain of Neisseria meningitidis Z2491.</title>
        <authorList>
            <person name="Parkhill J."/>
            <person name="Achtman M."/>
            <person name="James K.D."/>
            <person name="Bentley S.D."/>
            <person name="Churcher C.M."/>
            <person name="Klee S.R."/>
            <person name="Morelli G."/>
            <person name="Basham D."/>
            <person name="Brown D."/>
            <person name="Chillingworth T."/>
            <person name="Davies R.M."/>
            <person name="Davis P."/>
            <person name="Devlin K."/>
            <person name="Feltwell T."/>
            <person name="Hamlin N."/>
            <person name="Holroyd S."/>
            <person name="Jagels K."/>
            <person name="Leather S."/>
            <person name="Moule S."/>
            <person name="Mungall K.L."/>
            <person name="Quail M.A."/>
            <person name="Rajandream M.A."/>
            <person name="Rutherford K.M."/>
            <person name="Simmonds M."/>
            <person name="Skelton J."/>
            <person name="Whitehead S."/>
            <person name="Spratt B.G."/>
            <person name="Barrell B.G."/>
        </authorList>
    </citation>
    <scope>NUCLEOTIDE SEQUENCE [LARGE SCALE GENOMIC DNA]</scope>
    <source>
        <strain>DSM 15465 / Z2491</strain>
    </source>
</reference>
<dbReference type="EC" id="2.5.1.145" evidence="1"/>
<dbReference type="EMBL" id="AL157959">
    <property type="protein sequence ID" value="CAM08459.1"/>
    <property type="molecule type" value="Genomic_DNA"/>
</dbReference>
<dbReference type="PIR" id="E81895">
    <property type="entry name" value="E81895"/>
</dbReference>
<dbReference type="RefSeq" id="WP_002219328.1">
    <property type="nucleotide sequence ID" value="NC_003116.1"/>
</dbReference>
<dbReference type="SMR" id="Q9JUK4"/>
<dbReference type="EnsemblBacteria" id="CAM08459">
    <property type="protein sequence ID" value="CAM08459"/>
    <property type="gene ID" value="NMA1273"/>
</dbReference>
<dbReference type="GeneID" id="93386124"/>
<dbReference type="KEGG" id="nma:NMA1273"/>
<dbReference type="HOGENOM" id="CLU_013386_1_0_4"/>
<dbReference type="UniPathway" id="UPA00664"/>
<dbReference type="Proteomes" id="UP000000626">
    <property type="component" value="Chromosome"/>
</dbReference>
<dbReference type="GO" id="GO:0005886">
    <property type="term" value="C:plasma membrane"/>
    <property type="evidence" value="ECO:0007669"/>
    <property type="project" value="UniProtKB-SubCell"/>
</dbReference>
<dbReference type="GO" id="GO:0008961">
    <property type="term" value="F:phosphatidylglycerol-prolipoprotein diacylglyceryl transferase activity"/>
    <property type="evidence" value="ECO:0007669"/>
    <property type="project" value="UniProtKB-UniRule"/>
</dbReference>
<dbReference type="GO" id="GO:0042158">
    <property type="term" value="P:lipoprotein biosynthetic process"/>
    <property type="evidence" value="ECO:0007669"/>
    <property type="project" value="UniProtKB-UniRule"/>
</dbReference>
<dbReference type="HAMAP" id="MF_01147">
    <property type="entry name" value="Lgt"/>
    <property type="match status" value="1"/>
</dbReference>
<dbReference type="InterPro" id="IPR001640">
    <property type="entry name" value="Lgt"/>
</dbReference>
<dbReference type="NCBIfam" id="TIGR00544">
    <property type="entry name" value="lgt"/>
    <property type="match status" value="1"/>
</dbReference>
<dbReference type="PANTHER" id="PTHR30589:SF0">
    <property type="entry name" value="PHOSPHATIDYLGLYCEROL--PROLIPOPROTEIN DIACYLGLYCERYL TRANSFERASE"/>
    <property type="match status" value="1"/>
</dbReference>
<dbReference type="PANTHER" id="PTHR30589">
    <property type="entry name" value="PROLIPOPROTEIN DIACYLGLYCERYL TRANSFERASE"/>
    <property type="match status" value="1"/>
</dbReference>
<dbReference type="Pfam" id="PF01790">
    <property type="entry name" value="LGT"/>
    <property type="match status" value="1"/>
</dbReference>
<dbReference type="PROSITE" id="PS01311">
    <property type="entry name" value="LGT"/>
    <property type="match status" value="1"/>
</dbReference>
<accession>Q9JUK4</accession>
<accession>A1IRR5</accession>
<protein>
    <recommendedName>
        <fullName evidence="1">Phosphatidylglycerol--prolipoprotein diacylglyceryl transferase</fullName>
        <ecNumber evidence="1">2.5.1.145</ecNumber>
    </recommendedName>
</protein>
<name>LGT_NEIMA</name>
<evidence type="ECO:0000255" key="1">
    <source>
        <dbReference type="HAMAP-Rule" id="MF_01147"/>
    </source>
</evidence>
<keyword id="KW-0997">Cell inner membrane</keyword>
<keyword id="KW-1003">Cell membrane</keyword>
<keyword id="KW-0472">Membrane</keyword>
<keyword id="KW-0808">Transferase</keyword>
<keyword id="KW-0812">Transmembrane</keyword>
<keyword id="KW-1133">Transmembrane helix</keyword>